<evidence type="ECO:0000255" key="1">
    <source>
        <dbReference type="PROSITE-ProRule" id="PRU00111"/>
    </source>
</evidence>
<evidence type="ECO:0000256" key="2">
    <source>
        <dbReference type="SAM" id="MobiDB-lite"/>
    </source>
</evidence>
<evidence type="ECO:0000305" key="3"/>
<proteinExistence type="evidence at protein level"/>
<sequence>MKTTIYDVAKAAGVSITTVSRVINNTGRISDKTRQKVMNVMNEMAYTPNVHAAALTGKRTNMIALVAPDISNPFYGELAKSIEERADELGFQMLICSTDYDPKKETKYFSVLKQKKVDGIIFATGIESHDSMSALEEIASEQIPIAMISQDKPLLPMDIVVIDDVRGGYEAAKHLLSLGHTNIACIIGDGSTTGEKNRIKGFRQAMEEAGVPIDESLIIQTRFSLESGKEEAGKLLDRNAPTAIFAFNDVLACAAIQAARIRGIKVPDDLSIIGFDNTILAEMAAPPLTTVAQPIKEMGAERHRTAGRSNRGKRKAKQKIVLPPELVVRHSTSPLNT</sequence>
<dbReference type="EMBL" id="L08822">
    <property type="protein sequence ID" value="AAA03541.1"/>
    <property type="molecule type" value="Unassigned_DNA"/>
</dbReference>
<dbReference type="EMBL" id="Y09476">
    <property type="protein sequence ID" value="CAA70647.1"/>
    <property type="molecule type" value="Genomic_DNA"/>
</dbReference>
<dbReference type="EMBL" id="Z93940">
    <property type="protein sequence ID" value="CAB07961.1"/>
    <property type="molecule type" value="Genomic_DNA"/>
</dbReference>
<dbReference type="EMBL" id="AL009126">
    <property type="protein sequence ID" value="CAB12923.1"/>
    <property type="molecule type" value="Genomic_DNA"/>
</dbReference>
<dbReference type="PIR" id="G69613">
    <property type="entry name" value="A36940"/>
</dbReference>
<dbReference type="RefSeq" id="WP_003245813.1">
    <property type="nucleotide sequence ID" value="NZ_OZ025638.1"/>
</dbReference>
<dbReference type="SMR" id="P37947"/>
<dbReference type="FunCoup" id="P37947">
    <property type="interactions" value="107"/>
</dbReference>
<dbReference type="STRING" id="224308.BSU10840"/>
<dbReference type="PaxDb" id="224308-BSU10840"/>
<dbReference type="EnsemblBacteria" id="CAB12923">
    <property type="protein sequence ID" value="CAB12923"/>
    <property type="gene ID" value="BSU_10840"/>
</dbReference>
<dbReference type="GeneID" id="936363"/>
<dbReference type="KEGG" id="bsu:BSU10840"/>
<dbReference type="PATRIC" id="fig|224308.43.peg.1130"/>
<dbReference type="eggNOG" id="COG1609">
    <property type="taxonomic scope" value="Bacteria"/>
</dbReference>
<dbReference type="InParanoid" id="P37947"/>
<dbReference type="OrthoDB" id="9796186at2"/>
<dbReference type="BioCyc" id="BSUB:BSU10840-MONOMER"/>
<dbReference type="Proteomes" id="UP000001570">
    <property type="component" value="Chromosome"/>
</dbReference>
<dbReference type="GO" id="GO:0003700">
    <property type="term" value="F:DNA-binding transcription factor activity"/>
    <property type="evidence" value="ECO:0000318"/>
    <property type="project" value="GO_Central"/>
</dbReference>
<dbReference type="GO" id="GO:0000976">
    <property type="term" value="F:transcription cis-regulatory region binding"/>
    <property type="evidence" value="ECO:0000318"/>
    <property type="project" value="GO_Central"/>
</dbReference>
<dbReference type="GO" id="GO:0006355">
    <property type="term" value="P:regulation of DNA-templated transcription"/>
    <property type="evidence" value="ECO:0000318"/>
    <property type="project" value="GO_Central"/>
</dbReference>
<dbReference type="CDD" id="cd01392">
    <property type="entry name" value="HTH_LacI"/>
    <property type="match status" value="1"/>
</dbReference>
<dbReference type="CDD" id="cd19976">
    <property type="entry name" value="PBP1_DegA_Like"/>
    <property type="match status" value="1"/>
</dbReference>
<dbReference type="Gene3D" id="3.40.50.2300">
    <property type="match status" value="2"/>
</dbReference>
<dbReference type="Gene3D" id="1.10.260.40">
    <property type="entry name" value="lambda repressor-like DNA-binding domains"/>
    <property type="match status" value="1"/>
</dbReference>
<dbReference type="InterPro" id="IPR000843">
    <property type="entry name" value="HTH_LacI"/>
</dbReference>
<dbReference type="InterPro" id="IPR046335">
    <property type="entry name" value="LacI/GalR-like_sensor"/>
</dbReference>
<dbReference type="InterPro" id="IPR010982">
    <property type="entry name" value="Lambda_DNA-bd_dom_sf"/>
</dbReference>
<dbReference type="InterPro" id="IPR028082">
    <property type="entry name" value="Peripla_BP_I"/>
</dbReference>
<dbReference type="PANTHER" id="PTHR30146:SF147">
    <property type="entry name" value="HTH-TYPE TRANSCRIPTIONAL REGULATOR DEGA"/>
    <property type="match status" value="1"/>
</dbReference>
<dbReference type="PANTHER" id="PTHR30146">
    <property type="entry name" value="LACI-RELATED TRANSCRIPTIONAL REPRESSOR"/>
    <property type="match status" value="1"/>
</dbReference>
<dbReference type="Pfam" id="PF00356">
    <property type="entry name" value="LacI"/>
    <property type="match status" value="1"/>
</dbReference>
<dbReference type="Pfam" id="PF13377">
    <property type="entry name" value="Peripla_BP_3"/>
    <property type="match status" value="1"/>
</dbReference>
<dbReference type="PRINTS" id="PR00036">
    <property type="entry name" value="HTHLACI"/>
</dbReference>
<dbReference type="SMART" id="SM00354">
    <property type="entry name" value="HTH_LACI"/>
    <property type="match status" value="1"/>
</dbReference>
<dbReference type="SUPFAM" id="SSF47413">
    <property type="entry name" value="lambda repressor-like DNA-binding domains"/>
    <property type="match status" value="1"/>
</dbReference>
<dbReference type="SUPFAM" id="SSF53822">
    <property type="entry name" value="Periplasmic binding protein-like I"/>
    <property type="match status" value="1"/>
</dbReference>
<dbReference type="PROSITE" id="PS00356">
    <property type="entry name" value="HTH_LACI_1"/>
    <property type="match status" value="1"/>
</dbReference>
<dbReference type="PROSITE" id="PS50932">
    <property type="entry name" value="HTH_LACI_2"/>
    <property type="match status" value="1"/>
</dbReference>
<feature type="chain" id="PRO_0000107942" description="HTH-type transcriptional regulator DegA">
    <location>
        <begin position="1"/>
        <end position="337"/>
    </location>
</feature>
<feature type="domain" description="HTH lacI-type" evidence="1">
    <location>
        <begin position="1"/>
        <end position="57"/>
    </location>
</feature>
<feature type="DNA-binding region" description="H-T-H motif" evidence="1">
    <location>
        <begin position="5"/>
        <end position="24"/>
    </location>
</feature>
<feature type="region of interest" description="Disordered" evidence="2">
    <location>
        <begin position="300"/>
        <end position="319"/>
    </location>
</feature>
<feature type="sequence conflict" description="In Ref. 3; CAA70647." evidence="3" ref="3">
    <original>AERHRTAGRSNR</original>
    <variation>RSVIELLAEAIE</variation>
    <location>
        <begin position="300"/>
        <end position="311"/>
    </location>
</feature>
<organism>
    <name type="scientific">Bacillus subtilis (strain 168)</name>
    <dbReference type="NCBI Taxonomy" id="224308"/>
    <lineage>
        <taxon>Bacteria</taxon>
        <taxon>Bacillati</taxon>
        <taxon>Bacillota</taxon>
        <taxon>Bacilli</taxon>
        <taxon>Bacillales</taxon>
        <taxon>Bacillaceae</taxon>
        <taxon>Bacillus</taxon>
    </lineage>
</organism>
<name>DEGA_BACSU</name>
<gene>
    <name type="primary">degA</name>
    <name type="ordered locus">BSU10840</name>
</gene>
<accession>P37947</accession>
<accession>O06729</accession>
<protein>
    <recommendedName>
        <fullName>HTH-type transcriptional regulator DegA</fullName>
    </recommendedName>
    <alternativeName>
        <fullName>Degradation activator</fullName>
    </alternativeName>
</protein>
<comment type="function">
    <text>Involved in the control of degradation of B.subtilis amidophosphoribosyltransferase (purF). Probably activates the gene for a degradative protease.</text>
</comment>
<reference key="1">
    <citation type="journal article" date="1993" name="J. Bacteriol.">
        <title>The degA gene product accelerates degradation of Bacillus subtilis phosphoribosylpyrophosphate amidotransferase in Escherichia coli.</title>
        <authorList>
            <person name="Bussey L.B."/>
            <person name="Switzer R.L."/>
        </authorList>
    </citation>
    <scope>NUCLEOTIDE SEQUENCE [GENOMIC DNA]</scope>
    <scope>PROTEIN SEQUENCE OF 1-20</scope>
    <source>
        <strain>168 / DB104</strain>
    </source>
</reference>
<reference key="2">
    <citation type="submission" date="1997-04" db="EMBL/GenBank/DDBJ databases">
        <title>Bacillus subtilis genome project, DNA sequence from yucA to yucH.</title>
        <authorList>
            <person name="Oudega B."/>
            <person name="Koningstein G."/>
            <person name="Duesterhoeft A."/>
        </authorList>
    </citation>
    <scope>NUCLEOTIDE SEQUENCE [GENOMIC DNA]</scope>
    <source>
        <strain>168</strain>
    </source>
</reference>
<reference key="3">
    <citation type="journal article" date="1997" name="Microbiology">
        <title>A Bacillus subtilis chromosome segment at the 100 degrees to 102 degrees position encoding 11 membrane proteins.</title>
        <authorList>
            <person name="Roche B."/>
            <person name="Autret S."/>
            <person name="Levine A."/>
            <person name="Vannier F."/>
            <person name="Medina N."/>
            <person name="Seror S.J."/>
        </authorList>
    </citation>
    <scope>NUCLEOTIDE SEQUENCE [GENOMIC DNA]</scope>
    <source>
        <strain>168</strain>
    </source>
</reference>
<reference key="4">
    <citation type="journal article" date="1997" name="Nature">
        <title>The complete genome sequence of the Gram-positive bacterium Bacillus subtilis.</title>
        <authorList>
            <person name="Kunst F."/>
            <person name="Ogasawara N."/>
            <person name="Moszer I."/>
            <person name="Albertini A.M."/>
            <person name="Alloni G."/>
            <person name="Azevedo V."/>
            <person name="Bertero M.G."/>
            <person name="Bessieres P."/>
            <person name="Bolotin A."/>
            <person name="Borchert S."/>
            <person name="Borriss R."/>
            <person name="Boursier L."/>
            <person name="Brans A."/>
            <person name="Braun M."/>
            <person name="Brignell S.C."/>
            <person name="Bron S."/>
            <person name="Brouillet S."/>
            <person name="Bruschi C.V."/>
            <person name="Caldwell B."/>
            <person name="Capuano V."/>
            <person name="Carter N.M."/>
            <person name="Choi S.-K."/>
            <person name="Codani J.-J."/>
            <person name="Connerton I.F."/>
            <person name="Cummings N.J."/>
            <person name="Daniel R.A."/>
            <person name="Denizot F."/>
            <person name="Devine K.M."/>
            <person name="Duesterhoeft A."/>
            <person name="Ehrlich S.D."/>
            <person name="Emmerson P.T."/>
            <person name="Entian K.-D."/>
            <person name="Errington J."/>
            <person name="Fabret C."/>
            <person name="Ferrari E."/>
            <person name="Foulger D."/>
            <person name="Fritz C."/>
            <person name="Fujita M."/>
            <person name="Fujita Y."/>
            <person name="Fuma S."/>
            <person name="Galizzi A."/>
            <person name="Galleron N."/>
            <person name="Ghim S.-Y."/>
            <person name="Glaser P."/>
            <person name="Goffeau A."/>
            <person name="Golightly E.J."/>
            <person name="Grandi G."/>
            <person name="Guiseppi G."/>
            <person name="Guy B.J."/>
            <person name="Haga K."/>
            <person name="Haiech J."/>
            <person name="Harwood C.R."/>
            <person name="Henaut A."/>
            <person name="Hilbert H."/>
            <person name="Holsappel S."/>
            <person name="Hosono S."/>
            <person name="Hullo M.-F."/>
            <person name="Itaya M."/>
            <person name="Jones L.-M."/>
            <person name="Joris B."/>
            <person name="Karamata D."/>
            <person name="Kasahara Y."/>
            <person name="Klaerr-Blanchard M."/>
            <person name="Klein C."/>
            <person name="Kobayashi Y."/>
            <person name="Koetter P."/>
            <person name="Koningstein G."/>
            <person name="Krogh S."/>
            <person name="Kumano M."/>
            <person name="Kurita K."/>
            <person name="Lapidus A."/>
            <person name="Lardinois S."/>
            <person name="Lauber J."/>
            <person name="Lazarevic V."/>
            <person name="Lee S.-M."/>
            <person name="Levine A."/>
            <person name="Liu H."/>
            <person name="Masuda S."/>
            <person name="Mauel C."/>
            <person name="Medigue C."/>
            <person name="Medina N."/>
            <person name="Mellado R.P."/>
            <person name="Mizuno M."/>
            <person name="Moestl D."/>
            <person name="Nakai S."/>
            <person name="Noback M."/>
            <person name="Noone D."/>
            <person name="O'Reilly M."/>
            <person name="Ogawa K."/>
            <person name="Ogiwara A."/>
            <person name="Oudega B."/>
            <person name="Park S.-H."/>
            <person name="Parro V."/>
            <person name="Pohl T.M."/>
            <person name="Portetelle D."/>
            <person name="Porwollik S."/>
            <person name="Prescott A.M."/>
            <person name="Presecan E."/>
            <person name="Pujic P."/>
            <person name="Purnelle B."/>
            <person name="Rapoport G."/>
            <person name="Rey M."/>
            <person name="Reynolds S."/>
            <person name="Rieger M."/>
            <person name="Rivolta C."/>
            <person name="Rocha E."/>
            <person name="Roche B."/>
            <person name="Rose M."/>
            <person name="Sadaie Y."/>
            <person name="Sato T."/>
            <person name="Scanlan E."/>
            <person name="Schleich S."/>
            <person name="Schroeter R."/>
            <person name="Scoffone F."/>
            <person name="Sekiguchi J."/>
            <person name="Sekowska A."/>
            <person name="Seror S.J."/>
            <person name="Serror P."/>
            <person name="Shin B.-S."/>
            <person name="Soldo B."/>
            <person name="Sorokin A."/>
            <person name="Tacconi E."/>
            <person name="Takagi T."/>
            <person name="Takahashi H."/>
            <person name="Takemaru K."/>
            <person name="Takeuchi M."/>
            <person name="Tamakoshi A."/>
            <person name="Tanaka T."/>
            <person name="Terpstra P."/>
            <person name="Tognoni A."/>
            <person name="Tosato V."/>
            <person name="Uchiyama S."/>
            <person name="Vandenbol M."/>
            <person name="Vannier F."/>
            <person name="Vassarotti A."/>
            <person name="Viari A."/>
            <person name="Wambutt R."/>
            <person name="Wedler E."/>
            <person name="Wedler H."/>
            <person name="Weitzenegger T."/>
            <person name="Winters P."/>
            <person name="Wipat A."/>
            <person name="Yamamoto H."/>
            <person name="Yamane K."/>
            <person name="Yasumoto K."/>
            <person name="Yata K."/>
            <person name="Yoshida K."/>
            <person name="Yoshikawa H.-F."/>
            <person name="Zumstein E."/>
            <person name="Yoshikawa H."/>
            <person name="Danchin A."/>
        </authorList>
    </citation>
    <scope>NUCLEOTIDE SEQUENCE [LARGE SCALE GENOMIC DNA]</scope>
    <source>
        <strain>168</strain>
    </source>
</reference>
<keyword id="KW-0010">Activator</keyword>
<keyword id="KW-0903">Direct protein sequencing</keyword>
<keyword id="KW-0238">DNA-binding</keyword>
<keyword id="KW-1185">Reference proteome</keyword>
<keyword id="KW-0678">Repressor</keyword>
<keyword id="KW-0804">Transcription</keyword>
<keyword id="KW-0805">Transcription regulation</keyword>